<protein>
    <recommendedName>
        <fullName>Placenta-specific protein 9</fullName>
    </recommendedName>
</protein>
<name>PLAC9_HUMAN</name>
<dbReference type="EMBL" id="AL356095">
    <property type="status" value="NOT_ANNOTATED_CDS"/>
    <property type="molecule type" value="Genomic_DNA"/>
</dbReference>
<dbReference type="EMBL" id="BC066348">
    <property type="protein sequence ID" value="AAH66348.1"/>
    <property type="molecule type" value="mRNA"/>
</dbReference>
<dbReference type="EMBL" id="BC090922">
    <property type="protein sequence ID" value="AAH90922.1"/>
    <property type="molecule type" value="mRNA"/>
</dbReference>
<dbReference type="EMBL" id="BC117332">
    <property type="protein sequence ID" value="AAI17333.1"/>
    <property type="molecule type" value="mRNA"/>
</dbReference>
<dbReference type="EMBL" id="BC117334">
    <property type="protein sequence ID" value="AAI17335.1"/>
    <property type="molecule type" value="mRNA"/>
</dbReference>
<dbReference type="CCDS" id="CCDS31232.1"/>
<dbReference type="RefSeq" id="NP_001012991.1">
    <property type="nucleotide sequence ID" value="NM_001012973.3"/>
</dbReference>
<dbReference type="RefSeq" id="NP_001318054.1">
    <property type="nucleotide sequence ID" value="NM_001331125.1"/>
</dbReference>
<dbReference type="RefSeq" id="XP_054220969.1">
    <property type="nucleotide sequence ID" value="XM_054364994.1"/>
</dbReference>
<dbReference type="SMR" id="Q5JTB6"/>
<dbReference type="BioGRID" id="128524">
    <property type="interactions" value="28"/>
</dbReference>
<dbReference type="FunCoup" id="Q5JTB6">
    <property type="interactions" value="8"/>
</dbReference>
<dbReference type="IntAct" id="Q5JTB6">
    <property type="interactions" value="27"/>
</dbReference>
<dbReference type="STRING" id="9606.ENSP00000361337"/>
<dbReference type="GlyCosmos" id="Q5JTB6">
    <property type="glycosylation" value="1 site, 1 glycan"/>
</dbReference>
<dbReference type="GlyGen" id="Q5JTB6">
    <property type="glycosylation" value="1 site, 1 O-linked glycan (1 site)"/>
</dbReference>
<dbReference type="iPTMnet" id="Q5JTB6"/>
<dbReference type="PhosphoSitePlus" id="Q5JTB6"/>
<dbReference type="BioMuta" id="PLAC9"/>
<dbReference type="MassIVE" id="Q5JTB6"/>
<dbReference type="PaxDb" id="9606-ENSP00000361337"/>
<dbReference type="PeptideAtlas" id="Q5JTB6"/>
<dbReference type="ProteomicsDB" id="63208"/>
<dbReference type="Antibodypedia" id="29944">
    <property type="antibodies" value="82 antibodies from 19 providers"/>
</dbReference>
<dbReference type="DNASU" id="219348"/>
<dbReference type="Ensembl" id="ENST00000372263.4">
    <property type="protein sequence ID" value="ENSP00000361337.3"/>
    <property type="gene ID" value="ENSG00000189129.14"/>
</dbReference>
<dbReference type="GeneID" id="219348"/>
<dbReference type="KEGG" id="hsa:219348"/>
<dbReference type="MANE-Select" id="ENST00000372263.4">
    <property type="protein sequence ID" value="ENSP00000361337.3"/>
    <property type="RefSeq nucleotide sequence ID" value="NM_001012973.3"/>
    <property type="RefSeq protein sequence ID" value="NP_001012991.1"/>
</dbReference>
<dbReference type="UCSC" id="uc001kbp.2">
    <property type="organism name" value="human"/>
</dbReference>
<dbReference type="AGR" id="HGNC:19255"/>
<dbReference type="CTD" id="219348"/>
<dbReference type="DisGeNET" id="219348"/>
<dbReference type="GeneCards" id="PLAC9"/>
<dbReference type="HGNC" id="HGNC:19255">
    <property type="gene designation" value="PLAC9"/>
</dbReference>
<dbReference type="HPA" id="ENSG00000189129">
    <property type="expression patterns" value="Tissue enhanced (choroid)"/>
</dbReference>
<dbReference type="MIM" id="612857">
    <property type="type" value="gene"/>
</dbReference>
<dbReference type="neXtProt" id="NX_Q5JTB6"/>
<dbReference type="OpenTargets" id="ENSG00000189129"/>
<dbReference type="PharmGKB" id="PA134941839"/>
<dbReference type="VEuPathDB" id="HostDB:ENSG00000189129"/>
<dbReference type="eggNOG" id="ENOG502SEJ6">
    <property type="taxonomic scope" value="Eukaryota"/>
</dbReference>
<dbReference type="GeneTree" id="ENSGT00390000017848"/>
<dbReference type="HOGENOM" id="CLU_171497_0_0_1"/>
<dbReference type="InParanoid" id="Q5JTB6"/>
<dbReference type="OMA" id="CDTHVAV"/>
<dbReference type="OrthoDB" id="9937406at2759"/>
<dbReference type="PAN-GO" id="Q5JTB6">
    <property type="GO annotations" value="0 GO annotations based on evolutionary models"/>
</dbReference>
<dbReference type="PhylomeDB" id="Q5JTB6"/>
<dbReference type="TreeFam" id="TF338208"/>
<dbReference type="PathwayCommons" id="Q5JTB6"/>
<dbReference type="SignaLink" id="Q5JTB6"/>
<dbReference type="BioGRID-ORCS" id="219348">
    <property type="hits" value="47 hits in 1134 CRISPR screens"/>
</dbReference>
<dbReference type="GenomeRNAi" id="219348"/>
<dbReference type="Pharos" id="Q5JTB6">
    <property type="development level" value="Tbio"/>
</dbReference>
<dbReference type="PRO" id="PR:Q5JTB6"/>
<dbReference type="Proteomes" id="UP000005640">
    <property type="component" value="Chromosome 10"/>
</dbReference>
<dbReference type="RNAct" id="Q5JTB6">
    <property type="molecule type" value="protein"/>
</dbReference>
<dbReference type="Bgee" id="ENSG00000189129">
    <property type="expression patterns" value="Expressed in layer of synovial tissue and 145 other cell types or tissues"/>
</dbReference>
<dbReference type="ExpressionAtlas" id="Q5JTB6">
    <property type="expression patterns" value="baseline and differential"/>
</dbReference>
<dbReference type="GO" id="GO:0005576">
    <property type="term" value="C:extracellular region"/>
    <property type="evidence" value="ECO:0007669"/>
    <property type="project" value="UniProtKB-SubCell"/>
</dbReference>
<dbReference type="InterPro" id="IPR027941">
    <property type="entry name" value="PLAC9"/>
</dbReference>
<dbReference type="PANTHER" id="PTHR37355">
    <property type="entry name" value="PLACENTA-SPECIFIC PROTEIN 9"/>
    <property type="match status" value="1"/>
</dbReference>
<dbReference type="PANTHER" id="PTHR37355:SF1">
    <property type="entry name" value="PLACENTA-SPECIFIC PROTEIN 9"/>
    <property type="match status" value="1"/>
</dbReference>
<dbReference type="Pfam" id="PF15205">
    <property type="entry name" value="PLAC9"/>
    <property type="match status" value="1"/>
</dbReference>
<proteinExistence type="evidence at protein level"/>
<gene>
    <name type="primary">PLAC9</name>
</gene>
<comment type="interaction">
    <interactant intactId="EBI-3923605">
        <id>Q5JTB6</id>
    </interactant>
    <interactant intactId="EBI-744586">
        <id>Q9Y6C2</id>
        <label>EMILIN1</label>
    </interactant>
    <organismsDiffer>false</organismsDiffer>
    <experiments>5</experiments>
</comment>
<comment type="interaction">
    <interactant intactId="EBI-3923605">
        <id>Q5JTB6</id>
    </interactant>
    <interactant intactId="EBI-11748557">
        <id>Q9Y6C2-2</id>
        <label>EMILIN1</label>
    </interactant>
    <organismsDiffer>false</organismsDiffer>
    <experiments>7</experiments>
</comment>
<comment type="interaction">
    <interactant intactId="EBI-3923605">
        <id>Q5JTB6</id>
    </interactant>
    <interactant intactId="EBI-473189">
        <id>Q96D09</id>
        <label>GPRASP2</label>
    </interactant>
    <organismsDiffer>false</organismsDiffer>
    <experiments>3</experiments>
</comment>
<comment type="interaction">
    <interactant intactId="EBI-3923605">
        <id>Q5JTB6</id>
    </interactant>
    <interactant intactId="EBI-296723">
        <id>O95295</id>
        <label>SNAPIN</label>
    </interactant>
    <organismsDiffer>false</organismsDiffer>
    <experiments>3</experiments>
</comment>
<comment type="subcellular location">
    <subcellularLocation>
        <location evidence="2">Secreted</location>
    </subcellularLocation>
</comment>
<comment type="similarity">
    <text evidence="2">Belongs to the PLAC9 family.</text>
</comment>
<feature type="signal peptide" evidence="1">
    <location>
        <begin position="1"/>
        <end position="22"/>
    </location>
</feature>
<feature type="chain" id="PRO_0000261405" description="Placenta-specific protein 9">
    <location>
        <begin position="23"/>
        <end position="97"/>
    </location>
</feature>
<sequence length="97" mass="10309">MRPLLCALTGLALLRAAGSLAAAEPFSPPRGDSAQSTACDRHMAVQRRLDVMEEMVEKTVDHLGTEVKGLLGLLEELAWNLPPGPFSPAPDLLGDGF</sequence>
<evidence type="ECO:0000255" key="1"/>
<evidence type="ECO:0000305" key="2"/>
<accession>Q5JTB6</accession>
<keyword id="KW-1267">Proteomics identification</keyword>
<keyword id="KW-1185">Reference proteome</keyword>
<keyword id="KW-0964">Secreted</keyword>
<keyword id="KW-0732">Signal</keyword>
<organism>
    <name type="scientific">Homo sapiens</name>
    <name type="common">Human</name>
    <dbReference type="NCBI Taxonomy" id="9606"/>
    <lineage>
        <taxon>Eukaryota</taxon>
        <taxon>Metazoa</taxon>
        <taxon>Chordata</taxon>
        <taxon>Craniata</taxon>
        <taxon>Vertebrata</taxon>
        <taxon>Euteleostomi</taxon>
        <taxon>Mammalia</taxon>
        <taxon>Eutheria</taxon>
        <taxon>Euarchontoglires</taxon>
        <taxon>Primates</taxon>
        <taxon>Haplorrhini</taxon>
        <taxon>Catarrhini</taxon>
        <taxon>Hominidae</taxon>
        <taxon>Homo</taxon>
    </lineage>
</organism>
<reference key="1">
    <citation type="journal article" date="2004" name="Nature">
        <title>The DNA sequence and comparative analysis of human chromosome 10.</title>
        <authorList>
            <person name="Deloukas P."/>
            <person name="Earthrowl M.E."/>
            <person name="Grafham D.V."/>
            <person name="Rubenfield M."/>
            <person name="French L."/>
            <person name="Steward C.A."/>
            <person name="Sims S.K."/>
            <person name="Jones M.C."/>
            <person name="Searle S."/>
            <person name="Scott C."/>
            <person name="Howe K."/>
            <person name="Hunt S.E."/>
            <person name="Andrews T.D."/>
            <person name="Gilbert J.G.R."/>
            <person name="Swarbreck D."/>
            <person name="Ashurst J.L."/>
            <person name="Taylor A."/>
            <person name="Battles J."/>
            <person name="Bird C.P."/>
            <person name="Ainscough R."/>
            <person name="Almeida J.P."/>
            <person name="Ashwell R.I.S."/>
            <person name="Ambrose K.D."/>
            <person name="Babbage A.K."/>
            <person name="Bagguley C.L."/>
            <person name="Bailey J."/>
            <person name="Banerjee R."/>
            <person name="Bates K."/>
            <person name="Beasley H."/>
            <person name="Bray-Allen S."/>
            <person name="Brown A.J."/>
            <person name="Brown J.Y."/>
            <person name="Burford D.C."/>
            <person name="Burrill W."/>
            <person name="Burton J."/>
            <person name="Cahill P."/>
            <person name="Camire D."/>
            <person name="Carter N.P."/>
            <person name="Chapman J.C."/>
            <person name="Clark S.Y."/>
            <person name="Clarke G."/>
            <person name="Clee C.M."/>
            <person name="Clegg S."/>
            <person name="Corby N."/>
            <person name="Coulson A."/>
            <person name="Dhami P."/>
            <person name="Dutta I."/>
            <person name="Dunn M."/>
            <person name="Faulkner L."/>
            <person name="Frankish A."/>
            <person name="Frankland J.A."/>
            <person name="Garner P."/>
            <person name="Garnett J."/>
            <person name="Gribble S."/>
            <person name="Griffiths C."/>
            <person name="Grocock R."/>
            <person name="Gustafson E."/>
            <person name="Hammond S."/>
            <person name="Harley J.L."/>
            <person name="Hart E."/>
            <person name="Heath P.D."/>
            <person name="Ho T.P."/>
            <person name="Hopkins B."/>
            <person name="Horne J."/>
            <person name="Howden P.J."/>
            <person name="Huckle E."/>
            <person name="Hynds C."/>
            <person name="Johnson C."/>
            <person name="Johnson D."/>
            <person name="Kana A."/>
            <person name="Kay M."/>
            <person name="Kimberley A.M."/>
            <person name="Kershaw J.K."/>
            <person name="Kokkinaki M."/>
            <person name="Laird G.K."/>
            <person name="Lawlor S."/>
            <person name="Lee H.M."/>
            <person name="Leongamornlert D.A."/>
            <person name="Laird G."/>
            <person name="Lloyd C."/>
            <person name="Lloyd D.M."/>
            <person name="Loveland J."/>
            <person name="Lovell J."/>
            <person name="McLaren S."/>
            <person name="McLay K.E."/>
            <person name="McMurray A."/>
            <person name="Mashreghi-Mohammadi M."/>
            <person name="Matthews L."/>
            <person name="Milne S."/>
            <person name="Nickerson T."/>
            <person name="Nguyen M."/>
            <person name="Overton-Larty E."/>
            <person name="Palmer S.A."/>
            <person name="Pearce A.V."/>
            <person name="Peck A.I."/>
            <person name="Pelan S."/>
            <person name="Phillimore B."/>
            <person name="Porter K."/>
            <person name="Rice C.M."/>
            <person name="Rogosin A."/>
            <person name="Ross M.T."/>
            <person name="Sarafidou T."/>
            <person name="Sehra H.K."/>
            <person name="Shownkeen R."/>
            <person name="Skuce C.D."/>
            <person name="Smith M."/>
            <person name="Standring L."/>
            <person name="Sycamore N."/>
            <person name="Tester J."/>
            <person name="Thorpe A."/>
            <person name="Torcasso W."/>
            <person name="Tracey A."/>
            <person name="Tromans A."/>
            <person name="Tsolas J."/>
            <person name="Wall M."/>
            <person name="Walsh J."/>
            <person name="Wang H."/>
            <person name="Weinstock K."/>
            <person name="West A.P."/>
            <person name="Willey D.L."/>
            <person name="Whitehead S.L."/>
            <person name="Wilming L."/>
            <person name="Wray P.W."/>
            <person name="Young L."/>
            <person name="Chen Y."/>
            <person name="Lovering R.C."/>
            <person name="Moschonas N.K."/>
            <person name="Siebert R."/>
            <person name="Fechtel K."/>
            <person name="Bentley D."/>
            <person name="Durbin R.M."/>
            <person name="Hubbard T."/>
            <person name="Doucette-Stamm L."/>
            <person name="Beck S."/>
            <person name="Smith D.R."/>
            <person name="Rogers J."/>
        </authorList>
    </citation>
    <scope>NUCLEOTIDE SEQUENCE [LARGE SCALE GENOMIC DNA]</scope>
</reference>
<reference key="2">
    <citation type="journal article" date="2004" name="Genome Res.">
        <title>The status, quality, and expansion of the NIH full-length cDNA project: the Mammalian Gene Collection (MGC).</title>
        <authorList>
            <consortium name="The MGC Project Team"/>
        </authorList>
    </citation>
    <scope>NUCLEOTIDE SEQUENCE [LARGE SCALE MRNA]</scope>
    <source>
        <tissue>Placenta</tissue>
        <tissue>Testis</tissue>
    </source>
</reference>